<dbReference type="EC" id="2.7.1.30" evidence="1"/>
<dbReference type="EMBL" id="AE004091">
    <property type="protein sequence ID" value="AAG06967.1"/>
    <property type="molecule type" value="Genomic_DNA"/>
</dbReference>
<dbReference type="PIR" id="F83199">
    <property type="entry name" value="F83199"/>
</dbReference>
<dbReference type="RefSeq" id="NP_252269.1">
    <property type="nucleotide sequence ID" value="NC_002516.2"/>
</dbReference>
<dbReference type="SMR" id="Q9HY41"/>
<dbReference type="STRING" id="208964.PA3579"/>
<dbReference type="PaxDb" id="208964-PA3579"/>
<dbReference type="GeneID" id="880178"/>
<dbReference type="KEGG" id="pae:PA3579"/>
<dbReference type="PATRIC" id="fig|208964.12.peg.3745"/>
<dbReference type="PseudoCAP" id="PA3579"/>
<dbReference type="HOGENOM" id="CLU_009281_2_3_6"/>
<dbReference type="InParanoid" id="Q9HY41"/>
<dbReference type="OrthoDB" id="9805576at2"/>
<dbReference type="PhylomeDB" id="Q9HY41"/>
<dbReference type="BioCyc" id="PAER208964:G1FZ6-3648-MONOMER"/>
<dbReference type="UniPathway" id="UPA00618">
    <property type="reaction ID" value="UER00672"/>
</dbReference>
<dbReference type="Proteomes" id="UP000002438">
    <property type="component" value="Chromosome"/>
</dbReference>
<dbReference type="GO" id="GO:0005829">
    <property type="term" value="C:cytosol"/>
    <property type="evidence" value="ECO:0000318"/>
    <property type="project" value="GO_Central"/>
</dbReference>
<dbReference type="GO" id="GO:0005524">
    <property type="term" value="F:ATP binding"/>
    <property type="evidence" value="ECO:0007669"/>
    <property type="project" value="UniProtKB-UniRule"/>
</dbReference>
<dbReference type="GO" id="GO:0004370">
    <property type="term" value="F:glycerol kinase activity"/>
    <property type="evidence" value="ECO:0000250"/>
    <property type="project" value="UniProtKB"/>
</dbReference>
<dbReference type="GO" id="GO:0019563">
    <property type="term" value="P:glycerol catabolic process"/>
    <property type="evidence" value="ECO:0000318"/>
    <property type="project" value="GO_Central"/>
</dbReference>
<dbReference type="GO" id="GO:0006071">
    <property type="term" value="P:glycerol metabolic process"/>
    <property type="evidence" value="ECO:0000250"/>
    <property type="project" value="UniProtKB"/>
</dbReference>
<dbReference type="GO" id="GO:0006072">
    <property type="term" value="P:glycerol-3-phosphate metabolic process"/>
    <property type="evidence" value="ECO:0007669"/>
    <property type="project" value="InterPro"/>
</dbReference>
<dbReference type="CDD" id="cd07786">
    <property type="entry name" value="FGGY_EcGK_like"/>
    <property type="match status" value="1"/>
</dbReference>
<dbReference type="FunFam" id="3.30.420.40:FF:000007">
    <property type="entry name" value="Glycerol kinase"/>
    <property type="match status" value="1"/>
</dbReference>
<dbReference type="FunFam" id="3.30.420.40:FF:000008">
    <property type="entry name" value="Glycerol kinase"/>
    <property type="match status" value="1"/>
</dbReference>
<dbReference type="Gene3D" id="3.30.420.40">
    <property type="match status" value="2"/>
</dbReference>
<dbReference type="HAMAP" id="MF_00186">
    <property type="entry name" value="Glycerol_kin"/>
    <property type="match status" value="1"/>
</dbReference>
<dbReference type="InterPro" id="IPR043129">
    <property type="entry name" value="ATPase_NBD"/>
</dbReference>
<dbReference type="InterPro" id="IPR000577">
    <property type="entry name" value="Carb_kinase_FGGY"/>
</dbReference>
<dbReference type="InterPro" id="IPR018483">
    <property type="entry name" value="Carb_kinase_FGGY_CS"/>
</dbReference>
<dbReference type="InterPro" id="IPR018485">
    <property type="entry name" value="FGGY_C"/>
</dbReference>
<dbReference type="InterPro" id="IPR018484">
    <property type="entry name" value="FGGY_N"/>
</dbReference>
<dbReference type="InterPro" id="IPR005999">
    <property type="entry name" value="Glycerol_kin"/>
</dbReference>
<dbReference type="NCBIfam" id="TIGR01311">
    <property type="entry name" value="glycerol_kin"/>
    <property type="match status" value="1"/>
</dbReference>
<dbReference type="NCBIfam" id="NF000756">
    <property type="entry name" value="PRK00047.1"/>
    <property type="match status" value="1"/>
</dbReference>
<dbReference type="PANTHER" id="PTHR10196:SF78">
    <property type="entry name" value="GLYCEROL KINASE"/>
    <property type="match status" value="1"/>
</dbReference>
<dbReference type="PANTHER" id="PTHR10196">
    <property type="entry name" value="SUGAR KINASE"/>
    <property type="match status" value="1"/>
</dbReference>
<dbReference type="Pfam" id="PF02782">
    <property type="entry name" value="FGGY_C"/>
    <property type="match status" value="1"/>
</dbReference>
<dbReference type="Pfam" id="PF00370">
    <property type="entry name" value="FGGY_N"/>
    <property type="match status" value="1"/>
</dbReference>
<dbReference type="PIRSF" id="PIRSF000538">
    <property type="entry name" value="GlpK"/>
    <property type="match status" value="1"/>
</dbReference>
<dbReference type="SUPFAM" id="SSF53067">
    <property type="entry name" value="Actin-like ATPase domain"/>
    <property type="match status" value="2"/>
</dbReference>
<dbReference type="PROSITE" id="PS00933">
    <property type="entry name" value="FGGY_KINASES_1"/>
    <property type="match status" value="1"/>
</dbReference>
<keyword id="KW-0067">ATP-binding</keyword>
<keyword id="KW-0319">Glycerol metabolism</keyword>
<keyword id="KW-0418">Kinase</keyword>
<keyword id="KW-0547">Nucleotide-binding</keyword>
<keyword id="KW-1185">Reference proteome</keyword>
<keyword id="KW-0808">Transferase</keyword>
<name>GLPK1_PSEAE</name>
<comment type="function">
    <text evidence="1">Key enzyme in the regulation of glycerol uptake and metabolism. Catalyzes the phosphorylation of glycerol to yield sn-glycerol 3-phosphate.</text>
</comment>
<comment type="catalytic activity">
    <reaction evidence="1">
        <text>glycerol + ATP = sn-glycerol 3-phosphate + ADP + H(+)</text>
        <dbReference type="Rhea" id="RHEA:21644"/>
        <dbReference type="ChEBI" id="CHEBI:15378"/>
        <dbReference type="ChEBI" id="CHEBI:17754"/>
        <dbReference type="ChEBI" id="CHEBI:30616"/>
        <dbReference type="ChEBI" id="CHEBI:57597"/>
        <dbReference type="ChEBI" id="CHEBI:456216"/>
        <dbReference type="EC" id="2.7.1.30"/>
    </reaction>
</comment>
<comment type="activity regulation">
    <text evidence="1">Inhibited by fructose 1,6-bisphosphate (FBP).</text>
</comment>
<comment type="pathway">
    <text evidence="1">Polyol metabolism; glycerol degradation via glycerol kinase pathway; sn-glycerol 3-phosphate from glycerol: step 1/1.</text>
</comment>
<comment type="similarity">
    <text evidence="1">Belongs to the FGGY kinase family.</text>
</comment>
<accession>Q9HY41</accession>
<protein>
    <recommendedName>
        <fullName evidence="1">Glycerol kinase 1</fullName>
        <ecNumber evidence="1">2.7.1.30</ecNumber>
    </recommendedName>
    <alternativeName>
        <fullName evidence="1">ATP:glycerol 3-phosphotransferase 1</fullName>
    </alternativeName>
    <alternativeName>
        <fullName evidence="1">Glycerokinase 1</fullName>
        <shortName evidence="1">GK 1</shortName>
    </alternativeName>
</protein>
<proteinExistence type="inferred from homology"/>
<organism>
    <name type="scientific">Pseudomonas aeruginosa (strain ATCC 15692 / DSM 22644 / CIP 104116 / JCM 14847 / LMG 12228 / 1C / PRS 101 / PAO1)</name>
    <dbReference type="NCBI Taxonomy" id="208964"/>
    <lineage>
        <taxon>Bacteria</taxon>
        <taxon>Pseudomonadati</taxon>
        <taxon>Pseudomonadota</taxon>
        <taxon>Gammaproteobacteria</taxon>
        <taxon>Pseudomonadales</taxon>
        <taxon>Pseudomonadaceae</taxon>
        <taxon>Pseudomonas</taxon>
    </lineage>
</organism>
<feature type="chain" id="PRO_0000059477" description="Glycerol kinase 1">
    <location>
        <begin position="1"/>
        <end position="494"/>
    </location>
</feature>
<feature type="binding site" evidence="1">
    <location>
        <position position="12"/>
    </location>
    <ligand>
        <name>ADP</name>
        <dbReference type="ChEBI" id="CHEBI:456216"/>
    </ligand>
</feature>
<feature type="binding site" evidence="1">
    <location>
        <position position="12"/>
    </location>
    <ligand>
        <name>ATP</name>
        <dbReference type="ChEBI" id="CHEBI:30616"/>
    </ligand>
</feature>
<feature type="binding site" evidence="1">
    <location>
        <position position="12"/>
    </location>
    <ligand>
        <name>sn-glycerol 3-phosphate</name>
        <dbReference type="ChEBI" id="CHEBI:57597"/>
    </ligand>
</feature>
<feature type="binding site" evidence="1">
    <location>
        <position position="13"/>
    </location>
    <ligand>
        <name>ATP</name>
        <dbReference type="ChEBI" id="CHEBI:30616"/>
    </ligand>
</feature>
<feature type="binding site" evidence="1">
    <location>
        <position position="14"/>
    </location>
    <ligand>
        <name>ATP</name>
        <dbReference type="ChEBI" id="CHEBI:30616"/>
    </ligand>
</feature>
<feature type="binding site" evidence="1">
    <location>
        <position position="16"/>
    </location>
    <ligand>
        <name>ADP</name>
        <dbReference type="ChEBI" id="CHEBI:456216"/>
    </ligand>
</feature>
<feature type="binding site" evidence="1">
    <location>
        <position position="82"/>
    </location>
    <ligand>
        <name>glycerol</name>
        <dbReference type="ChEBI" id="CHEBI:17754"/>
    </ligand>
</feature>
<feature type="binding site" evidence="1">
    <location>
        <position position="82"/>
    </location>
    <ligand>
        <name>sn-glycerol 3-phosphate</name>
        <dbReference type="ChEBI" id="CHEBI:57597"/>
    </ligand>
</feature>
<feature type="binding site" evidence="1">
    <location>
        <position position="83"/>
    </location>
    <ligand>
        <name>glycerol</name>
        <dbReference type="ChEBI" id="CHEBI:17754"/>
    </ligand>
</feature>
<feature type="binding site" evidence="1">
    <location>
        <position position="83"/>
    </location>
    <ligand>
        <name>sn-glycerol 3-phosphate</name>
        <dbReference type="ChEBI" id="CHEBI:57597"/>
    </ligand>
</feature>
<feature type="binding site" evidence="1">
    <location>
        <position position="134"/>
    </location>
    <ligand>
        <name>glycerol</name>
        <dbReference type="ChEBI" id="CHEBI:17754"/>
    </ligand>
</feature>
<feature type="binding site" evidence="1">
    <location>
        <position position="134"/>
    </location>
    <ligand>
        <name>sn-glycerol 3-phosphate</name>
        <dbReference type="ChEBI" id="CHEBI:57597"/>
    </ligand>
</feature>
<feature type="binding site" evidence="1">
    <location>
        <position position="243"/>
    </location>
    <ligand>
        <name>glycerol</name>
        <dbReference type="ChEBI" id="CHEBI:17754"/>
    </ligand>
</feature>
<feature type="binding site" evidence="1">
    <location>
        <position position="243"/>
    </location>
    <ligand>
        <name>sn-glycerol 3-phosphate</name>
        <dbReference type="ChEBI" id="CHEBI:57597"/>
    </ligand>
</feature>
<feature type="binding site" evidence="1">
    <location>
        <position position="244"/>
    </location>
    <ligand>
        <name>glycerol</name>
        <dbReference type="ChEBI" id="CHEBI:17754"/>
    </ligand>
</feature>
<feature type="binding site" evidence="1">
    <location>
        <position position="265"/>
    </location>
    <ligand>
        <name>ADP</name>
        <dbReference type="ChEBI" id="CHEBI:456216"/>
    </ligand>
</feature>
<feature type="binding site" evidence="1">
    <location>
        <position position="265"/>
    </location>
    <ligand>
        <name>ATP</name>
        <dbReference type="ChEBI" id="CHEBI:30616"/>
    </ligand>
</feature>
<feature type="binding site" evidence="1">
    <location>
        <position position="308"/>
    </location>
    <ligand>
        <name>ADP</name>
        <dbReference type="ChEBI" id="CHEBI:456216"/>
    </ligand>
</feature>
<feature type="binding site" evidence="1">
    <location>
        <position position="308"/>
    </location>
    <ligand>
        <name>ATP</name>
        <dbReference type="ChEBI" id="CHEBI:30616"/>
    </ligand>
</feature>
<feature type="binding site" evidence="1">
    <location>
        <position position="312"/>
    </location>
    <ligand>
        <name>ATP</name>
        <dbReference type="ChEBI" id="CHEBI:30616"/>
    </ligand>
</feature>
<feature type="binding site" evidence="1">
    <location>
        <position position="408"/>
    </location>
    <ligand>
        <name>ADP</name>
        <dbReference type="ChEBI" id="CHEBI:456216"/>
    </ligand>
</feature>
<feature type="binding site" evidence="1">
    <location>
        <position position="408"/>
    </location>
    <ligand>
        <name>ATP</name>
        <dbReference type="ChEBI" id="CHEBI:30616"/>
    </ligand>
</feature>
<feature type="binding site" evidence="1">
    <location>
        <position position="412"/>
    </location>
    <ligand>
        <name>ADP</name>
        <dbReference type="ChEBI" id="CHEBI:456216"/>
    </ligand>
</feature>
<reference key="1">
    <citation type="journal article" date="2000" name="Nature">
        <title>Complete genome sequence of Pseudomonas aeruginosa PAO1, an opportunistic pathogen.</title>
        <authorList>
            <person name="Stover C.K."/>
            <person name="Pham X.-Q.T."/>
            <person name="Erwin A.L."/>
            <person name="Mizoguchi S.D."/>
            <person name="Warrener P."/>
            <person name="Hickey M.J."/>
            <person name="Brinkman F.S.L."/>
            <person name="Hufnagle W.O."/>
            <person name="Kowalik D.J."/>
            <person name="Lagrou M."/>
            <person name="Garber R.L."/>
            <person name="Goltry L."/>
            <person name="Tolentino E."/>
            <person name="Westbrock-Wadman S."/>
            <person name="Yuan Y."/>
            <person name="Brody L.L."/>
            <person name="Coulter S.N."/>
            <person name="Folger K.R."/>
            <person name="Kas A."/>
            <person name="Larbig K."/>
            <person name="Lim R.M."/>
            <person name="Smith K.A."/>
            <person name="Spencer D.H."/>
            <person name="Wong G.K.-S."/>
            <person name="Wu Z."/>
            <person name="Paulsen I.T."/>
            <person name="Reizer J."/>
            <person name="Saier M.H. Jr."/>
            <person name="Hancock R.E.W."/>
            <person name="Lory S."/>
            <person name="Olson M.V."/>
        </authorList>
    </citation>
    <scope>NUCLEOTIDE SEQUENCE [LARGE SCALE GENOMIC DNA]</scope>
    <source>
        <strain>ATCC 15692 / DSM 22644 / CIP 104116 / JCM 14847 / LMG 12228 / 1C / PRS 101 / PAO1</strain>
    </source>
</reference>
<gene>
    <name evidence="1" type="primary">glpK1</name>
    <name type="synonym">glpK2</name>
    <name type="ordered locus">PA3579</name>
</gene>
<evidence type="ECO:0000255" key="1">
    <source>
        <dbReference type="HAMAP-Rule" id="MF_00186"/>
    </source>
</evidence>
<sequence>MSHYLLAIDQGTTSSRAIVFSAQGLPVASCQQEFKQYFPKDGWVEHDGEEIWLTTLQVCRDALARKGLRAADIAAIGITNQRETTLVWDAASGDLIHPAIVWQDRRTADYCAELKAAGHEANVSARTGLLIDPYFSATKLRWILDNVPGARQRAERGELRFGTVDCFLLWRLTGGRSHRTDATNASRTLLFNIHSQDWDEELLALFEIPRSLLPEVLDCAAEFGVSEPSLLGAAIPVLGMAGDQQAALIGQACFQPGMVKSTYGTGCFMIQNTGEQPVTSKNRLLTTVGYRLDGKVSYAVEGSIFVAGAAVQWLRDGIKLIDHAHESEALAIQAGDSNGVYLVPAFTGLGAPYWDPKARGAIFGLTRDTGIKEIVTAGLQSVCYQTRDLLEAMRQDGTPPSALRVDGGMVVNNWMMQFLTDILGVTVERPEVTETTALGVAYMAGLKAGFYRDLDDIASHWHLQRRFAAHMAEERRGELYAGWQNAVRRVRSEA</sequence>